<comment type="function">
    <text evidence="1">One of the primary rRNA binding proteins, it binds directly to 16S rRNA where it helps nucleate assembly of the platform of the 30S subunit by binding and bridging several RNA helices of the 16S rRNA.</text>
</comment>
<comment type="function">
    <text evidence="1">Forms an intersubunit bridge (bridge B4) with the 23S rRNA of the 50S subunit in the ribosome.</text>
</comment>
<comment type="subunit">
    <text evidence="1">Part of the 30S ribosomal subunit. Forms a bridge to the 50S subunit in the 70S ribosome, contacting the 23S rRNA.</text>
</comment>
<comment type="similarity">
    <text evidence="1">Belongs to the universal ribosomal protein uS15 family.</text>
</comment>
<feature type="chain" id="PRO_1000073336" description="Small ribosomal subunit protein uS15">
    <location>
        <begin position="1"/>
        <end position="89"/>
    </location>
</feature>
<proteinExistence type="inferred from homology"/>
<gene>
    <name evidence="1" type="primary">rpsO</name>
    <name type="ordered locus">Plav_3631</name>
</gene>
<protein>
    <recommendedName>
        <fullName evidence="1">Small ribosomal subunit protein uS15</fullName>
    </recommendedName>
    <alternativeName>
        <fullName evidence="2">30S ribosomal protein S15</fullName>
    </alternativeName>
</protein>
<reference key="1">
    <citation type="journal article" date="2011" name="Stand. Genomic Sci.">
        <title>Complete genome sequence of Parvibaculum lavamentivorans type strain (DS-1(T)).</title>
        <authorList>
            <person name="Schleheck D."/>
            <person name="Weiss M."/>
            <person name="Pitluck S."/>
            <person name="Bruce D."/>
            <person name="Land M.L."/>
            <person name="Han S."/>
            <person name="Saunders E."/>
            <person name="Tapia R."/>
            <person name="Detter C."/>
            <person name="Brettin T."/>
            <person name="Han J."/>
            <person name="Woyke T."/>
            <person name="Goodwin L."/>
            <person name="Pennacchio L."/>
            <person name="Nolan M."/>
            <person name="Cook A.M."/>
            <person name="Kjelleberg S."/>
            <person name="Thomas T."/>
        </authorList>
    </citation>
    <scope>NUCLEOTIDE SEQUENCE [LARGE SCALE GENOMIC DNA]</scope>
    <source>
        <strain>DS-1 / DSM 13023 / NCIMB 13966</strain>
    </source>
</reference>
<keyword id="KW-1185">Reference proteome</keyword>
<keyword id="KW-0687">Ribonucleoprotein</keyword>
<keyword id="KW-0689">Ribosomal protein</keyword>
<keyword id="KW-0694">RNA-binding</keyword>
<keyword id="KW-0699">rRNA-binding</keyword>
<evidence type="ECO:0000255" key="1">
    <source>
        <dbReference type="HAMAP-Rule" id="MF_01343"/>
    </source>
</evidence>
<evidence type="ECO:0000305" key="2"/>
<sequence length="89" mass="10287">MSITPERKAQLIKEFAGKDGDTGSPEVQVAILTERIVNLTEHFRGHAKDNHSRRGLLKMVSQRRSLLDYVKKKDQARYEKLISRLGIRR</sequence>
<dbReference type="EMBL" id="CP000774">
    <property type="protein sequence ID" value="ABS65229.1"/>
    <property type="molecule type" value="Genomic_DNA"/>
</dbReference>
<dbReference type="RefSeq" id="WP_012112490.1">
    <property type="nucleotide sequence ID" value="NC_009719.1"/>
</dbReference>
<dbReference type="SMR" id="A7HZ96"/>
<dbReference type="STRING" id="402881.Plav_3631"/>
<dbReference type="KEGG" id="pla:Plav_3631"/>
<dbReference type="eggNOG" id="COG0184">
    <property type="taxonomic scope" value="Bacteria"/>
</dbReference>
<dbReference type="HOGENOM" id="CLU_148518_0_0_5"/>
<dbReference type="OrthoDB" id="9799262at2"/>
<dbReference type="Proteomes" id="UP000006377">
    <property type="component" value="Chromosome"/>
</dbReference>
<dbReference type="GO" id="GO:0022627">
    <property type="term" value="C:cytosolic small ribosomal subunit"/>
    <property type="evidence" value="ECO:0007669"/>
    <property type="project" value="TreeGrafter"/>
</dbReference>
<dbReference type="GO" id="GO:0019843">
    <property type="term" value="F:rRNA binding"/>
    <property type="evidence" value="ECO:0007669"/>
    <property type="project" value="UniProtKB-UniRule"/>
</dbReference>
<dbReference type="GO" id="GO:0003735">
    <property type="term" value="F:structural constituent of ribosome"/>
    <property type="evidence" value="ECO:0007669"/>
    <property type="project" value="InterPro"/>
</dbReference>
<dbReference type="GO" id="GO:0006412">
    <property type="term" value="P:translation"/>
    <property type="evidence" value="ECO:0007669"/>
    <property type="project" value="UniProtKB-UniRule"/>
</dbReference>
<dbReference type="CDD" id="cd00353">
    <property type="entry name" value="Ribosomal_S15p_S13e"/>
    <property type="match status" value="1"/>
</dbReference>
<dbReference type="FunFam" id="1.10.287.10:FF:000002">
    <property type="entry name" value="30S ribosomal protein S15"/>
    <property type="match status" value="1"/>
</dbReference>
<dbReference type="Gene3D" id="6.10.250.3130">
    <property type="match status" value="1"/>
</dbReference>
<dbReference type="Gene3D" id="1.10.287.10">
    <property type="entry name" value="S15/NS1, RNA-binding"/>
    <property type="match status" value="1"/>
</dbReference>
<dbReference type="HAMAP" id="MF_01343_B">
    <property type="entry name" value="Ribosomal_uS15_B"/>
    <property type="match status" value="1"/>
</dbReference>
<dbReference type="InterPro" id="IPR000589">
    <property type="entry name" value="Ribosomal_uS15"/>
</dbReference>
<dbReference type="InterPro" id="IPR005290">
    <property type="entry name" value="Ribosomal_uS15_bac-type"/>
</dbReference>
<dbReference type="InterPro" id="IPR009068">
    <property type="entry name" value="uS15_NS1_RNA-bd_sf"/>
</dbReference>
<dbReference type="NCBIfam" id="TIGR00952">
    <property type="entry name" value="S15_bact"/>
    <property type="match status" value="1"/>
</dbReference>
<dbReference type="PANTHER" id="PTHR23321">
    <property type="entry name" value="RIBOSOMAL PROTEIN S15, BACTERIAL AND ORGANELLAR"/>
    <property type="match status" value="1"/>
</dbReference>
<dbReference type="PANTHER" id="PTHR23321:SF26">
    <property type="entry name" value="SMALL RIBOSOMAL SUBUNIT PROTEIN US15M"/>
    <property type="match status" value="1"/>
</dbReference>
<dbReference type="Pfam" id="PF00312">
    <property type="entry name" value="Ribosomal_S15"/>
    <property type="match status" value="1"/>
</dbReference>
<dbReference type="SMART" id="SM01387">
    <property type="entry name" value="Ribosomal_S15"/>
    <property type="match status" value="1"/>
</dbReference>
<dbReference type="SUPFAM" id="SSF47060">
    <property type="entry name" value="S15/NS1 RNA-binding domain"/>
    <property type="match status" value="1"/>
</dbReference>
<dbReference type="PROSITE" id="PS00362">
    <property type="entry name" value="RIBOSOMAL_S15"/>
    <property type="match status" value="1"/>
</dbReference>
<name>RS15_PARL1</name>
<accession>A7HZ96</accession>
<organism>
    <name type="scientific">Parvibaculum lavamentivorans (strain DS-1 / DSM 13023 / NCIMB 13966)</name>
    <dbReference type="NCBI Taxonomy" id="402881"/>
    <lineage>
        <taxon>Bacteria</taxon>
        <taxon>Pseudomonadati</taxon>
        <taxon>Pseudomonadota</taxon>
        <taxon>Alphaproteobacteria</taxon>
        <taxon>Hyphomicrobiales</taxon>
        <taxon>Parvibaculaceae</taxon>
        <taxon>Parvibaculum</taxon>
    </lineage>
</organism>